<dbReference type="EC" id="3.5.4.19"/>
<dbReference type="EC" id="3.6.1.31"/>
<dbReference type="EC" id="1.1.1.23"/>
<dbReference type="EMBL" id="U14126">
    <property type="protein sequence ID" value="AAA67001.1"/>
    <property type="molecule type" value="Genomic_DNA"/>
</dbReference>
<dbReference type="EMBL" id="X56180">
    <property type="protein sequence ID" value="CAA39641.1"/>
    <property type="molecule type" value="Genomic_DNA"/>
</dbReference>
<dbReference type="PIR" id="S51513">
    <property type="entry name" value="S51513"/>
</dbReference>
<dbReference type="SMR" id="P45353"/>
<dbReference type="UniPathway" id="UPA00031">
    <property type="reaction ID" value="UER00007"/>
</dbReference>
<dbReference type="UniPathway" id="UPA00031">
    <property type="reaction ID" value="UER00008"/>
</dbReference>
<dbReference type="UniPathway" id="UPA00031">
    <property type="reaction ID" value="UER00014"/>
</dbReference>
<dbReference type="GO" id="GO:0005829">
    <property type="term" value="C:cytosol"/>
    <property type="evidence" value="ECO:0007669"/>
    <property type="project" value="TreeGrafter"/>
</dbReference>
<dbReference type="GO" id="GO:0005524">
    <property type="term" value="F:ATP binding"/>
    <property type="evidence" value="ECO:0007669"/>
    <property type="project" value="UniProtKB-KW"/>
</dbReference>
<dbReference type="GO" id="GO:0004399">
    <property type="term" value="F:histidinol dehydrogenase activity"/>
    <property type="evidence" value="ECO:0007669"/>
    <property type="project" value="UniProtKB-EC"/>
</dbReference>
<dbReference type="GO" id="GO:0046872">
    <property type="term" value="F:metal ion binding"/>
    <property type="evidence" value="ECO:0007669"/>
    <property type="project" value="UniProtKB-KW"/>
</dbReference>
<dbReference type="GO" id="GO:0051287">
    <property type="term" value="F:NAD binding"/>
    <property type="evidence" value="ECO:0007669"/>
    <property type="project" value="InterPro"/>
</dbReference>
<dbReference type="GO" id="GO:0004635">
    <property type="term" value="F:phosphoribosyl-AMP cyclohydrolase activity"/>
    <property type="evidence" value="ECO:0007669"/>
    <property type="project" value="UniProtKB-EC"/>
</dbReference>
<dbReference type="GO" id="GO:0004636">
    <property type="term" value="F:phosphoribosyl-ATP diphosphatase activity"/>
    <property type="evidence" value="ECO:0007669"/>
    <property type="project" value="UniProtKB-EC"/>
</dbReference>
<dbReference type="GO" id="GO:0000105">
    <property type="term" value="P:L-histidine biosynthetic process"/>
    <property type="evidence" value="ECO:0007669"/>
    <property type="project" value="UniProtKB-UniPathway"/>
</dbReference>
<dbReference type="CDD" id="cd06572">
    <property type="entry name" value="Histidinol_dh"/>
    <property type="match status" value="1"/>
</dbReference>
<dbReference type="CDD" id="cd11546">
    <property type="entry name" value="NTP-PPase_His4"/>
    <property type="match status" value="1"/>
</dbReference>
<dbReference type="FunFam" id="1.10.287.1080:FF:000002">
    <property type="entry name" value="Histidine biosynthesis bifunctional protein HisIE"/>
    <property type="match status" value="1"/>
</dbReference>
<dbReference type="FunFam" id="3.10.20.810:FF:000002">
    <property type="entry name" value="Histidine biosynthesis trifunctional protein"/>
    <property type="match status" value="1"/>
</dbReference>
<dbReference type="FunFam" id="3.40.50.1980:FF:000050">
    <property type="entry name" value="Histidine biosynthesis trifunctional protein"/>
    <property type="match status" value="1"/>
</dbReference>
<dbReference type="FunFam" id="3.40.50.1980:FF:000001">
    <property type="entry name" value="Histidinol dehydrogenase"/>
    <property type="match status" value="1"/>
</dbReference>
<dbReference type="FunFam" id="1.20.5.1300:FF:000002">
    <property type="entry name" value="Histidinol dehydrogenase, chloroplastic"/>
    <property type="match status" value="1"/>
</dbReference>
<dbReference type="Gene3D" id="1.20.5.1300">
    <property type="match status" value="1"/>
</dbReference>
<dbReference type="Gene3D" id="1.10.287.1080">
    <property type="entry name" value="MazG-like"/>
    <property type="match status" value="1"/>
</dbReference>
<dbReference type="Gene3D" id="3.40.50.1980">
    <property type="entry name" value="Nitrogenase molybdenum iron protein domain"/>
    <property type="match status" value="2"/>
</dbReference>
<dbReference type="Gene3D" id="3.10.20.810">
    <property type="entry name" value="Phosphoribosyl-AMP cyclohydrolase"/>
    <property type="match status" value="1"/>
</dbReference>
<dbReference type="HAMAP" id="MF_01024">
    <property type="entry name" value="HisD"/>
    <property type="match status" value="1"/>
</dbReference>
<dbReference type="InterPro" id="IPR016161">
    <property type="entry name" value="Ald_DH/histidinol_DH"/>
</dbReference>
<dbReference type="InterPro" id="IPR008179">
    <property type="entry name" value="HisE"/>
</dbReference>
<dbReference type="InterPro" id="IPR016298">
    <property type="entry name" value="Histidine_synth_trifunct"/>
</dbReference>
<dbReference type="InterPro" id="IPR001692">
    <property type="entry name" value="Histidinol_DH_CS"/>
</dbReference>
<dbReference type="InterPro" id="IPR012131">
    <property type="entry name" value="Hstdl_DH"/>
</dbReference>
<dbReference type="InterPro" id="IPR021130">
    <property type="entry name" value="PRib-ATP_PPHydrolase-like"/>
</dbReference>
<dbReference type="InterPro" id="IPR002496">
    <property type="entry name" value="PRib_AMP_CycHydrolase_dom"/>
</dbReference>
<dbReference type="InterPro" id="IPR038019">
    <property type="entry name" value="PRib_AMP_CycHydrolase_sf"/>
</dbReference>
<dbReference type="NCBIfam" id="TIGR00069">
    <property type="entry name" value="hisD"/>
    <property type="match status" value="1"/>
</dbReference>
<dbReference type="NCBIfam" id="TIGR03188">
    <property type="entry name" value="histidine_hisI"/>
    <property type="match status" value="1"/>
</dbReference>
<dbReference type="PANTHER" id="PTHR21256:SF2">
    <property type="entry name" value="HISTIDINE BIOSYNTHESIS TRIFUNCTIONAL PROTEIN"/>
    <property type="match status" value="1"/>
</dbReference>
<dbReference type="PANTHER" id="PTHR21256">
    <property type="entry name" value="HISTIDINOL DEHYDROGENASE HDH"/>
    <property type="match status" value="1"/>
</dbReference>
<dbReference type="Pfam" id="PF00815">
    <property type="entry name" value="Histidinol_dh"/>
    <property type="match status" value="1"/>
</dbReference>
<dbReference type="Pfam" id="PF01502">
    <property type="entry name" value="PRA-CH"/>
    <property type="match status" value="1"/>
</dbReference>
<dbReference type="Pfam" id="PF01503">
    <property type="entry name" value="PRA-PH"/>
    <property type="match status" value="1"/>
</dbReference>
<dbReference type="PIRSF" id="PIRSF001257">
    <property type="entry name" value="His_trifunctional"/>
    <property type="match status" value="1"/>
</dbReference>
<dbReference type="PRINTS" id="PR00083">
    <property type="entry name" value="HOLDHDRGNASE"/>
</dbReference>
<dbReference type="SUPFAM" id="SSF53720">
    <property type="entry name" value="ALDH-like"/>
    <property type="match status" value="1"/>
</dbReference>
<dbReference type="SUPFAM" id="SSF101386">
    <property type="entry name" value="all-alpha NTP pyrophosphatases"/>
    <property type="match status" value="1"/>
</dbReference>
<dbReference type="SUPFAM" id="SSF141734">
    <property type="entry name" value="HisI-like"/>
    <property type="match status" value="1"/>
</dbReference>
<dbReference type="PROSITE" id="PS00611">
    <property type="entry name" value="HISOL_DEHYDROGENASE"/>
    <property type="match status" value="1"/>
</dbReference>
<reference key="1">
    <citation type="journal article" date="1994" name="Curr. Genet.">
        <title>The Pichia pastoris HIS4 gene: nucleotide sequence, creation of a non-reverting his4 deletion mutant, and development of HIS4-based replicating and integrating plasmids.</title>
        <authorList>
            <person name="Crane D.I."/>
            <person name="Gould S.J."/>
        </authorList>
    </citation>
    <scope>NUCLEOTIDE SEQUENCE [GENOMIC DNA]</scope>
</reference>
<reference key="2">
    <citation type="submission" date="1990-10" db="EMBL/GenBank/DDBJ databases">
        <authorList>
            <person name="Koutz P.J."/>
            <person name="Davis G.R."/>
            <person name="Thill G.P."/>
        </authorList>
    </citation>
    <scope>NUCLEOTIDE SEQUENCE [GENOMIC DNA]</scope>
    <source>
        <strain>ATCC 76273 / CBS 7435 / CECT 11407 / NRRL Y-11430</strain>
    </source>
</reference>
<sequence>MTFPLLPAYASVAEFDNSLSLVGKAVFPYAADQLHNLIKFTQSTELQVNVQVESSVTEDQFEELIDNLLKLYNNGINEVILDLDLAERVVQRIPGARVIYRTLVDKVASLPANASIAVPFSSPLGDLKSFTNGGSRTVYAFSETAKLVDVTSTVASGIIPIIDARQLTTEYELSEDVKKFPVSEILLASLTTDRPDGLFTTLVADSSNYSLGLVYSSKKSIPEAIRTQTGVYQSRRHGLWYKGATSGATQKLLGIELDCDGDCLKFVVEQTGVGFCHLERTSCFGQSKGLRAMEATLWDRKSNAPEGSYTKRLFDDEVLLNAKIREEADELAEAKSKEDIAWECADLFYFALVRCAKYGVTLDEVERNLDMKSLKVTRRKGDAKPGYTKEQPKEESKPKEVPSEGRIELCKIDVSKASSQEIEDALRRPIQKTEQIMELVKPIVDNVRQNGDKALLELTAKFDGVALKTPVLEAPFPEELMQLPDNVKRAIDLSIDNVRKFHEAQLAETLQVETCPGVVCSRFARPIEKVGLYIPGGTAILPSTSLMLGVPAKVAGCKEIVFASPPKKDGTLTPEVIYVAHKVGAKCIVLAGGAQAVAAMAYGTETVPKCDKIFGPGNQFVTAAKMMVQNDTSALCSIDMPAGPSEVLVIADKYADPDFVVSDLLSQAEHGIDSQVILLAVDMTDKELARIEDAVHNQAVQLPRVEIVRKCIAHSTTLSVATYEQALEMSNQYAPEHLILQIENASYVDQVQHAGSVFVGAYSPESCGDYSSGTNHTLPTYGYARQYSGVNTATFQKFITSQDVTPEGLKHIGQAVMDLAAVEGLDAHRNAVKVRMEKLGLI</sequence>
<organism>
    <name type="scientific">Komagataella pastoris</name>
    <name type="common">Yeast</name>
    <name type="synonym">Pichia pastoris</name>
    <dbReference type="NCBI Taxonomy" id="4922"/>
    <lineage>
        <taxon>Eukaryota</taxon>
        <taxon>Fungi</taxon>
        <taxon>Dikarya</taxon>
        <taxon>Ascomycota</taxon>
        <taxon>Saccharomycotina</taxon>
        <taxon>Pichiomycetes</taxon>
        <taxon>Pichiales</taxon>
        <taxon>Pichiaceae</taxon>
        <taxon>Komagataella</taxon>
    </lineage>
</organism>
<gene>
    <name type="primary">HIS4</name>
</gene>
<feature type="chain" id="PRO_0000135912" description="Histidine biosynthesis trifunctional protein">
    <location>
        <begin position="1"/>
        <end position="842"/>
    </location>
</feature>
<feature type="region of interest" description="Phosphoribosyl-AMP cyclohydrolase">
    <location>
        <begin position="1"/>
        <end position="275"/>
    </location>
</feature>
<feature type="region of interest" description="Phosphoribosyl-ATP pyrophosphohydrolase">
    <location>
        <begin position="276"/>
        <end position="357"/>
    </location>
</feature>
<feature type="region of interest" description="Histidinol dehydrogenase">
    <location>
        <begin position="358"/>
        <end position="842"/>
    </location>
</feature>
<feature type="region of interest" description="Disordered" evidence="2">
    <location>
        <begin position="380"/>
        <end position="403"/>
    </location>
</feature>
<feature type="compositionally biased region" description="Basic and acidic residues" evidence="2">
    <location>
        <begin position="390"/>
        <end position="403"/>
    </location>
</feature>
<feature type="active site" evidence="1">
    <location>
        <position position="736"/>
    </location>
</feature>
<feature type="active site" evidence="1">
    <location>
        <position position="737"/>
    </location>
</feature>
<feature type="binding site" evidence="1">
    <location>
        <position position="667"/>
    </location>
    <ligand>
        <name>Zn(2+)</name>
        <dbReference type="ChEBI" id="CHEBI:29105"/>
    </ligand>
</feature>
<feature type="binding site" evidence="1">
    <location>
        <position position="670"/>
    </location>
    <ligand>
        <name>Zn(2+)</name>
        <dbReference type="ChEBI" id="CHEBI:29105"/>
    </ligand>
</feature>
<feature type="binding site" evidence="1">
    <location>
        <position position="769"/>
    </location>
    <ligand>
        <name>Zn(2+)</name>
        <dbReference type="ChEBI" id="CHEBI:29105"/>
    </ligand>
</feature>
<feature type="binding site" evidence="1">
    <location>
        <position position="828"/>
    </location>
    <ligand>
        <name>Zn(2+)</name>
        <dbReference type="ChEBI" id="CHEBI:29105"/>
    </ligand>
</feature>
<feature type="sequence conflict" description="In Ref. 2." evidence="3" ref="2">
    <original>R</original>
    <variation>RM</variation>
    <location>
        <position position="92"/>
    </location>
</feature>
<feature type="sequence conflict" description="In Ref. 2; CAA39641." evidence="3" ref="2">
    <original>A</original>
    <variation>T</variation>
    <location>
        <position position="507"/>
    </location>
</feature>
<feature type="sequence conflict" description="In Ref. 2; CAA39641." evidence="3" ref="2">
    <original>V</original>
    <variation>A</variation>
    <location>
        <position position="661"/>
    </location>
</feature>
<feature type="sequence conflict" description="In Ref. 2; CAA39641." evidence="3" ref="2">
    <original>S</original>
    <variation>SS</variation>
    <location>
        <position position="746"/>
    </location>
</feature>
<protein>
    <recommendedName>
        <fullName>Histidine biosynthesis trifunctional protein</fullName>
    </recommendedName>
    <domain>
        <recommendedName>
            <fullName>Phosphoribosyl-AMP cyclohydrolase</fullName>
            <ecNumber>3.5.4.19</ecNumber>
        </recommendedName>
    </domain>
    <domain>
        <recommendedName>
            <fullName>Phosphoribosyl-ATP pyrophosphohydrolase</fullName>
            <ecNumber>3.6.1.31</ecNumber>
        </recommendedName>
    </domain>
    <domain>
        <recommendedName>
            <fullName>Histidinol dehydrogenase</fullName>
            <shortName>HDH</shortName>
            <ecNumber>1.1.1.23</ecNumber>
        </recommendedName>
    </domain>
</protein>
<accession>P45353</accession>
<proteinExistence type="inferred from homology"/>
<keyword id="KW-0028">Amino-acid biosynthesis</keyword>
<keyword id="KW-0067">ATP-binding</keyword>
<keyword id="KW-0368">Histidine biosynthesis</keyword>
<keyword id="KW-0378">Hydrolase</keyword>
<keyword id="KW-0479">Metal-binding</keyword>
<keyword id="KW-0511">Multifunctional enzyme</keyword>
<keyword id="KW-0520">NAD</keyword>
<keyword id="KW-0547">Nucleotide-binding</keyword>
<keyword id="KW-0560">Oxidoreductase</keyword>
<keyword id="KW-0862">Zinc</keyword>
<name>HIS2_PICPA</name>
<evidence type="ECO:0000250" key="1"/>
<evidence type="ECO:0000256" key="2">
    <source>
        <dbReference type="SAM" id="MobiDB-lite"/>
    </source>
</evidence>
<evidence type="ECO:0000305" key="3"/>
<comment type="catalytic activity">
    <reaction>
        <text>1-(5-phospho-beta-D-ribosyl)-5'-AMP + H2O = 1-(5-phospho-beta-D-ribosyl)-5-[(5-phospho-beta-D-ribosylamino)methylideneamino]imidazole-4-carboxamide</text>
        <dbReference type="Rhea" id="RHEA:20049"/>
        <dbReference type="ChEBI" id="CHEBI:15377"/>
        <dbReference type="ChEBI" id="CHEBI:58435"/>
        <dbReference type="ChEBI" id="CHEBI:59457"/>
        <dbReference type="EC" id="3.5.4.19"/>
    </reaction>
</comment>
<comment type="catalytic activity">
    <reaction>
        <text>1-(5-phospho-beta-D-ribosyl)-ATP + H2O = 1-(5-phospho-beta-D-ribosyl)-5'-AMP + diphosphate + H(+)</text>
        <dbReference type="Rhea" id="RHEA:22828"/>
        <dbReference type="ChEBI" id="CHEBI:15377"/>
        <dbReference type="ChEBI" id="CHEBI:15378"/>
        <dbReference type="ChEBI" id="CHEBI:33019"/>
        <dbReference type="ChEBI" id="CHEBI:59457"/>
        <dbReference type="ChEBI" id="CHEBI:73183"/>
        <dbReference type="EC" id="3.6.1.31"/>
    </reaction>
</comment>
<comment type="catalytic activity">
    <reaction>
        <text>L-histidinol + 2 NAD(+) + H2O = L-histidine + 2 NADH + 3 H(+)</text>
        <dbReference type="Rhea" id="RHEA:20641"/>
        <dbReference type="ChEBI" id="CHEBI:15377"/>
        <dbReference type="ChEBI" id="CHEBI:15378"/>
        <dbReference type="ChEBI" id="CHEBI:57540"/>
        <dbReference type="ChEBI" id="CHEBI:57595"/>
        <dbReference type="ChEBI" id="CHEBI:57699"/>
        <dbReference type="ChEBI" id="CHEBI:57945"/>
        <dbReference type="EC" id="1.1.1.23"/>
    </reaction>
</comment>
<comment type="cofactor">
    <cofactor evidence="1">
        <name>Zn(2+)</name>
        <dbReference type="ChEBI" id="CHEBI:29105"/>
    </cofactor>
    <text evidence="1">Binds 1 zinc ion.</text>
</comment>
<comment type="pathway">
    <text>Amino-acid biosynthesis; L-histidine biosynthesis; L-histidine from 5-phospho-alpha-D-ribose 1-diphosphate: step 2/9.</text>
</comment>
<comment type="pathway">
    <text>Amino-acid biosynthesis; L-histidine biosynthesis; L-histidine from 5-phospho-alpha-D-ribose 1-diphosphate: step 3/9.</text>
</comment>
<comment type="pathway">
    <text>Amino-acid biosynthesis; L-histidine biosynthesis; L-histidine from 5-phospho-alpha-D-ribose 1-diphosphate: step 9/9.</text>
</comment>
<comment type="similarity">
    <text evidence="3">In the C-terminal section; belongs to the histidinol dehydrogenase family.</text>
</comment>